<proteinExistence type="evidence at transcript level"/>
<gene>
    <name evidence="10" type="primary">Tbkbp1</name>
</gene>
<comment type="function">
    <text evidence="1">Adapter protein which constitutively binds TBK1 and IKBKE playing a role in antiviral innate immunity. Essential for the efficient induction of IRF-dependent transcription following infection with Sendai virus (By similarity).</text>
</comment>
<comment type="subunit">
    <text evidence="2 3">Homodimer (By similarity). May form a heterodimer with NAP1. Interacts with TKB1 and IKBKE (By similarity). Weakly interacts with DDX3X (By similarity).</text>
</comment>
<accession>Q6DG50</accession>
<accession>Q8K1Q5</accession>
<dbReference type="EMBL" id="AJ278800">
    <property type="protein sequence ID" value="CAC82181.1"/>
    <property type="molecule type" value="mRNA"/>
</dbReference>
<dbReference type="EMBL" id="BC076503">
    <property type="protein sequence ID" value="AAH76503.1"/>
    <property type="molecule type" value="mRNA"/>
</dbReference>
<dbReference type="RefSeq" id="NP_742018.2">
    <property type="nucleotide sequence ID" value="NM_172021.2"/>
</dbReference>
<dbReference type="RefSeq" id="XP_038941243.1">
    <property type="nucleotide sequence ID" value="XM_039085315.1"/>
</dbReference>
<dbReference type="SMR" id="Q6DG50"/>
<dbReference type="FunCoup" id="Q6DG50">
    <property type="interactions" value="762"/>
</dbReference>
<dbReference type="STRING" id="10116.ENSRNOP00000012461"/>
<dbReference type="GlyGen" id="Q6DG50">
    <property type="glycosylation" value="1 site"/>
</dbReference>
<dbReference type="iPTMnet" id="Q6DG50"/>
<dbReference type="PhosphoSitePlus" id="Q6DG50"/>
<dbReference type="PaxDb" id="10116-ENSRNOP00000012461"/>
<dbReference type="Ensembl" id="ENSRNOT00000012462.5">
    <property type="protein sequence ID" value="ENSRNOP00000012461.4"/>
    <property type="gene ID" value="ENSRNOG00000009370.6"/>
</dbReference>
<dbReference type="GeneID" id="266764"/>
<dbReference type="KEGG" id="rno:266764"/>
<dbReference type="UCSC" id="RGD:631328">
    <property type="organism name" value="rat"/>
</dbReference>
<dbReference type="AGR" id="RGD:631328"/>
<dbReference type="CTD" id="9755"/>
<dbReference type="RGD" id="631328">
    <property type="gene designation" value="Tbkbp1"/>
</dbReference>
<dbReference type="eggNOG" id="ENOG502QVP4">
    <property type="taxonomic scope" value="Eukaryota"/>
</dbReference>
<dbReference type="GeneTree" id="ENSGT00940000153704"/>
<dbReference type="HOGENOM" id="CLU_029090_0_0_1"/>
<dbReference type="InParanoid" id="Q6DG50"/>
<dbReference type="OMA" id="CHPQQGY"/>
<dbReference type="OrthoDB" id="8796075at2759"/>
<dbReference type="PhylomeDB" id="Q6DG50"/>
<dbReference type="TreeFam" id="TF331289"/>
<dbReference type="PRO" id="PR:Q6DG50"/>
<dbReference type="Proteomes" id="UP000002494">
    <property type="component" value="Chromosome 10"/>
</dbReference>
<dbReference type="Bgee" id="ENSRNOG00000009370">
    <property type="expression patterns" value="Expressed in Ammon's horn and 20 other cell types or tissues"/>
</dbReference>
<dbReference type="GO" id="GO:0005737">
    <property type="term" value="C:cytoplasm"/>
    <property type="evidence" value="ECO:0000318"/>
    <property type="project" value="GO_Central"/>
</dbReference>
<dbReference type="GO" id="GO:0008270">
    <property type="term" value="F:zinc ion binding"/>
    <property type="evidence" value="ECO:0007669"/>
    <property type="project" value="UniProtKB-KW"/>
</dbReference>
<dbReference type="GO" id="GO:0045087">
    <property type="term" value="P:innate immune response"/>
    <property type="evidence" value="ECO:0007669"/>
    <property type="project" value="UniProtKB-KW"/>
</dbReference>
<dbReference type="InterPro" id="IPR041641">
    <property type="entry name" value="CALCOCO1/2_Zn_UBZ1"/>
</dbReference>
<dbReference type="InterPro" id="IPR024581">
    <property type="entry name" value="TBD"/>
</dbReference>
<dbReference type="InterPro" id="IPR051891">
    <property type="entry name" value="TBK1-IKBKE_adapters"/>
</dbReference>
<dbReference type="PANTHER" id="PTHR14432">
    <property type="entry name" value="PROSAPIP2 PROTEIN/5-AZACYTIDINE INDUCED GENE 2"/>
    <property type="match status" value="1"/>
</dbReference>
<dbReference type="PANTHER" id="PTHR14432:SF2">
    <property type="entry name" value="TANK-BINDING KINASE 1-BINDING PROTEIN 1"/>
    <property type="match status" value="1"/>
</dbReference>
<dbReference type="Pfam" id="PF12845">
    <property type="entry name" value="TBD"/>
    <property type="match status" value="1"/>
</dbReference>
<dbReference type="PROSITE" id="PS51905">
    <property type="entry name" value="ZF_UBZ1"/>
    <property type="match status" value="1"/>
</dbReference>
<feature type="chain" id="PRO_0000324656" description="TANK-binding kinase 1-binding protein 1">
    <location>
        <begin position="1"/>
        <end position="613"/>
    </location>
</feature>
<feature type="zinc finger region" description="UBZ1-type" evidence="5">
    <location>
        <begin position="581"/>
        <end position="607"/>
    </location>
</feature>
<feature type="region of interest" description="Homodimerization" evidence="1">
    <location>
        <begin position="1"/>
        <end position="280"/>
    </location>
</feature>
<feature type="region of interest" description="Interaction with TBK1 and IKBKE" evidence="1">
    <location>
        <begin position="281"/>
        <end position="330"/>
    </location>
</feature>
<feature type="region of interest" description="Disordered" evidence="6">
    <location>
        <begin position="328"/>
        <end position="457"/>
    </location>
</feature>
<feature type="coiled-coil region" evidence="4">
    <location>
        <begin position="48"/>
        <end position="162"/>
    </location>
</feature>
<feature type="coiled-coil region" evidence="4">
    <location>
        <begin position="218"/>
        <end position="277"/>
    </location>
</feature>
<feature type="compositionally biased region" description="Pro residues" evidence="6">
    <location>
        <begin position="346"/>
        <end position="361"/>
    </location>
</feature>
<feature type="compositionally biased region" description="Low complexity" evidence="6">
    <location>
        <begin position="362"/>
        <end position="372"/>
    </location>
</feature>
<feature type="compositionally biased region" description="Pro residues" evidence="6">
    <location>
        <begin position="389"/>
        <end position="406"/>
    </location>
</feature>
<feature type="compositionally biased region" description="Pro residues" evidence="6">
    <location>
        <begin position="416"/>
        <end position="433"/>
    </location>
</feature>
<feature type="binding site" evidence="5">
    <location>
        <position position="584"/>
    </location>
    <ligand>
        <name>Zn(2+)</name>
        <dbReference type="ChEBI" id="CHEBI:29105"/>
    </ligand>
</feature>
<feature type="binding site" evidence="5">
    <location>
        <position position="587"/>
    </location>
    <ligand>
        <name>Zn(2+)</name>
        <dbReference type="ChEBI" id="CHEBI:29105"/>
    </ligand>
</feature>
<feature type="binding site" evidence="5">
    <location>
        <position position="603"/>
    </location>
    <ligand>
        <name>Zn(2+)</name>
        <dbReference type="ChEBI" id="CHEBI:29105"/>
    </ligand>
</feature>
<feature type="binding site" evidence="5">
    <location>
        <position position="607"/>
    </location>
    <ligand>
        <name>Zn(2+)</name>
        <dbReference type="ChEBI" id="CHEBI:29105"/>
    </ligand>
</feature>
<feature type="modified residue" description="Phosphoserine" evidence="3">
    <location>
        <position position="184"/>
    </location>
</feature>
<feature type="modified residue" description="Phosphoserine" evidence="3">
    <location>
        <position position="365"/>
    </location>
</feature>
<feature type="modified residue" description="Phosphoserine" evidence="3">
    <location>
        <position position="372"/>
    </location>
</feature>
<feature type="modified residue" description="Phosphoserine" evidence="3">
    <location>
        <position position="379"/>
    </location>
</feature>
<feature type="modified residue" description="Phosphoserine" evidence="3">
    <location>
        <position position="385"/>
    </location>
</feature>
<feature type="modified residue" description="Phosphoserine" evidence="3">
    <location>
        <position position="400"/>
    </location>
</feature>
<feature type="modified residue" description="Phosphoserine" evidence="3">
    <location>
        <position position="415"/>
    </location>
</feature>
<feature type="modified residue" description="Phosphoserine" evidence="3">
    <location>
        <position position="502"/>
    </location>
</feature>
<feature type="modified residue" description="Phosphoserine" evidence="3">
    <location>
        <position position="532"/>
    </location>
</feature>
<feature type="sequence conflict" description="In Ref. 1; CAC82181." evidence="7" ref="1">
    <original>G</original>
    <variation>S</variation>
    <location>
        <position position="26"/>
    </location>
</feature>
<feature type="sequence conflict" description="In Ref. 1; CAC82181." evidence="7" ref="1">
    <location>
        <begin position="222"/>
        <end position="223"/>
    </location>
</feature>
<feature type="sequence conflict" description="In Ref. 1; CAC82181." evidence="7" ref="1">
    <original>P</original>
    <variation>R</variation>
    <location>
        <position position="401"/>
    </location>
</feature>
<feature type="sequence conflict" description="In Ref. 1; CAC82181." evidence="7" ref="1">
    <original>S</original>
    <variation>F</variation>
    <location>
        <position position="408"/>
    </location>
</feature>
<feature type="sequence conflict" description="In Ref. 1; CAC82181." evidence="7" ref="1">
    <original>P</original>
    <variation>L</variation>
    <location>
        <position position="416"/>
    </location>
</feature>
<feature type="sequence conflict" description="In Ref. 1; CAC82181." evidence="7" ref="1">
    <original>R</original>
    <variation>G</variation>
    <location>
        <position position="427"/>
    </location>
</feature>
<feature type="sequence conflict" description="In Ref. 1; CAC82181." evidence="7" ref="1">
    <original>P</original>
    <variation>PHP</variation>
    <location>
        <position position="431"/>
    </location>
</feature>
<feature type="sequence conflict" description="In Ref. 1; CAC82181." evidence="7" ref="1">
    <original>A</original>
    <variation>V</variation>
    <location>
        <position position="443"/>
    </location>
</feature>
<evidence type="ECO:0000250" key="1"/>
<evidence type="ECO:0000250" key="2">
    <source>
        <dbReference type="UniProtKB" id="A2A9T0"/>
    </source>
</evidence>
<evidence type="ECO:0000250" key="3">
    <source>
        <dbReference type="UniProtKB" id="A7MCY6"/>
    </source>
</evidence>
<evidence type="ECO:0000255" key="4"/>
<evidence type="ECO:0000255" key="5">
    <source>
        <dbReference type="PROSITE-ProRule" id="PRU01253"/>
    </source>
</evidence>
<evidence type="ECO:0000256" key="6">
    <source>
        <dbReference type="SAM" id="MobiDB-lite"/>
    </source>
</evidence>
<evidence type="ECO:0000305" key="7"/>
<evidence type="ECO:0000312" key="8">
    <source>
        <dbReference type="EMBL" id="AAH76503.1"/>
    </source>
</evidence>
<evidence type="ECO:0000312" key="9">
    <source>
        <dbReference type="EMBL" id="CAC82181.1"/>
    </source>
</evidence>
<evidence type="ECO:0000312" key="10">
    <source>
        <dbReference type="RGD" id="631328"/>
    </source>
</evidence>
<keyword id="KW-0175">Coiled coil</keyword>
<keyword id="KW-0391">Immunity</keyword>
<keyword id="KW-0399">Innate immunity</keyword>
<keyword id="KW-0479">Metal-binding</keyword>
<keyword id="KW-0597">Phosphoprotein</keyword>
<keyword id="KW-1185">Reference proteome</keyword>
<keyword id="KW-0862">Zinc</keyword>
<keyword id="KW-0863">Zinc-finger</keyword>
<reference evidence="9" key="1">
    <citation type="submission" date="2000-08" db="EMBL/GenBank/DDBJ databases">
        <title>Cloning of ProSAPiP2.</title>
        <authorList>
            <person name="Boeckers T.M."/>
        </authorList>
    </citation>
    <scope>NUCLEOTIDE SEQUENCE [MRNA]</scope>
</reference>
<reference evidence="8" key="2">
    <citation type="journal article" date="2004" name="Genome Res.">
        <title>The status, quality, and expansion of the NIH full-length cDNA project: the Mammalian Gene Collection (MGC).</title>
        <authorList>
            <consortium name="The MGC Project Team"/>
        </authorList>
    </citation>
    <scope>NUCLEOTIDE SEQUENCE [LARGE SCALE MRNA]</scope>
    <source>
        <tissue evidence="8">Lung</tissue>
    </source>
</reference>
<name>TBKB1_RAT</name>
<organism>
    <name type="scientific">Rattus norvegicus</name>
    <name type="common">Rat</name>
    <dbReference type="NCBI Taxonomy" id="10116"/>
    <lineage>
        <taxon>Eukaryota</taxon>
        <taxon>Metazoa</taxon>
        <taxon>Chordata</taxon>
        <taxon>Craniata</taxon>
        <taxon>Vertebrata</taxon>
        <taxon>Euteleostomi</taxon>
        <taxon>Mammalia</taxon>
        <taxon>Eutheria</taxon>
        <taxon>Euarchontoglires</taxon>
        <taxon>Glires</taxon>
        <taxon>Rodentia</taxon>
        <taxon>Myomorpha</taxon>
        <taxon>Muroidea</taxon>
        <taxon>Muridae</taxon>
        <taxon>Murinae</taxon>
        <taxon>Rattus</taxon>
    </lineage>
</organism>
<protein>
    <recommendedName>
        <fullName>TANK-binding kinase 1-binding protein 1</fullName>
        <shortName>TBK1-binding protein 1</shortName>
    </recommendedName>
    <alternativeName>
        <fullName>Protein ProSAPiP2</fullName>
    </alternativeName>
</protein>
<sequence length="613" mass="67155">MESMFEDDISILTQEALGPSEVWLDGPGDPSLGGDMCSASHFALITAYGDIKERLGGLERENATLRRRLKVYEIKYPLITDFGEEHGFPLYEIKDGSLLEVEKVSLQQRLNQFQHELQKNKEQEEQLGEMIQAYEKLCVEKSDLETELGEMRALVETHLRQICGLEKQLQQQQGLRDAAFSSLSPPAVPATACPDLDLHYLALRGGPALGHAGWPGPTSVSVSELERRRLEEALEAAQGEARGAQLREEQLQAECERLQGELKQLQETRAQDLASNQSECGMAWVKRVGDDQVNLALAYTELTEELGRLRELSSLQGRILRTLLQEQARNAGQRHSPLSQRHSPAPACPSPSPPARPPPCAPCQSPAAQRRSPVPPCPSPQQRRSPASPSCPSPVPQRRSPVPPSCQSPSPQRRSPVPPSCPAPQPRPPPPPGERTLAERAYAKPPSHHAKAGFQGRRSYSELAEGAAYAAASPAWLQAEAATLPKPRAYGGELYGPGRPLSPRRAFEGIRLRFEKQPSEEEEWAMPASPPSPEASTIRCASFCAGFPIPESPAATAYAHAEHAQSWPSINLLMETVGSDIRSCPLCQLGFPVGYPDDALIKHIDSHLENSKI</sequence>